<feature type="chain" id="PRO_0000088803" description="Phosphatidylinositol 3-kinase catalytic subunit type 3">
    <location>
        <begin position="1"/>
        <end position="887"/>
    </location>
</feature>
<feature type="domain" description="C2 PI3K-type" evidence="6">
    <location>
        <begin position="35"/>
        <end position="184"/>
    </location>
</feature>
<feature type="domain" description="PIK helical" evidence="5">
    <location>
        <begin position="283"/>
        <end position="520"/>
    </location>
</feature>
<feature type="domain" description="PI3K/PI4K catalytic" evidence="4">
    <location>
        <begin position="605"/>
        <end position="871"/>
    </location>
</feature>
<feature type="region of interest" description="Disordered" evidence="7">
    <location>
        <begin position="149"/>
        <end position="170"/>
    </location>
</feature>
<feature type="region of interest" description="Disordered" evidence="7">
    <location>
        <begin position="415"/>
        <end position="466"/>
    </location>
</feature>
<feature type="region of interest" description="G-loop" evidence="4">
    <location>
        <begin position="611"/>
        <end position="617"/>
    </location>
</feature>
<feature type="region of interest" description="Catalytic loop" evidence="4">
    <location>
        <begin position="740"/>
        <end position="748"/>
    </location>
</feature>
<feature type="region of interest" description="Activation loop" evidence="4">
    <location>
        <begin position="759"/>
        <end position="780"/>
    </location>
</feature>
<feature type="compositionally biased region" description="Polar residues" evidence="7">
    <location>
        <begin position="156"/>
        <end position="170"/>
    </location>
</feature>
<feature type="compositionally biased region" description="Low complexity" evidence="7">
    <location>
        <begin position="425"/>
        <end position="437"/>
    </location>
</feature>
<feature type="compositionally biased region" description="Pro residues" evidence="7">
    <location>
        <begin position="449"/>
        <end position="459"/>
    </location>
</feature>
<feature type="modified residue" description="Phosphothreonine; by AMPK" evidence="11">
    <location>
        <position position="163"/>
    </location>
</feature>
<feature type="modified residue" description="Phosphoserine; by AMPK" evidence="11">
    <location>
        <position position="165"/>
    </location>
</feature>
<feature type="modified residue" description="Phosphoserine" evidence="1">
    <location>
        <position position="244"/>
    </location>
</feature>
<feature type="modified residue" description="Phosphoserine" evidence="2">
    <location>
        <position position="261"/>
    </location>
</feature>
<feature type="modified residue" description="Phosphoserine" evidence="2">
    <location>
        <position position="282"/>
    </location>
</feature>
<feature type="splice variant" id="VSP_016459" description="In isoform 2." evidence="14">
    <original>VQDKFRL</original>
    <variation>ISCHRKM</variation>
    <location>
        <begin position="842"/>
        <end position="848"/>
    </location>
</feature>
<feature type="splice variant" id="VSP_016460" description="In isoform 2." evidence="14">
    <location>
        <begin position="849"/>
        <end position="887"/>
    </location>
</feature>
<feature type="mutagenesis site" description="Loss of phosphorylation but no loss of autophagic function; when associated with A-165." evidence="11">
    <original>T</original>
    <variation>A</variation>
    <location>
        <position position="163"/>
    </location>
</feature>
<feature type="mutagenesis site" description="Loss of phosphorylation but no loss of autophagic function; when associated with A-163." evidence="11">
    <original>S</original>
    <variation>A</variation>
    <location>
        <position position="165"/>
    </location>
</feature>
<feature type="sequence conflict" description="In Ref. 1; AAH57678." evidence="16" ref="1">
    <location>
        <position position="455"/>
    </location>
</feature>
<feature type="sequence conflict" description="In Ref. 1; AAH57678." evidence="16" ref="1">
    <original>N</original>
    <variation>S</variation>
    <location>
        <position position="470"/>
    </location>
</feature>
<reference key="1">
    <citation type="journal article" date="2004" name="Genome Res.">
        <title>The status, quality, and expansion of the NIH full-length cDNA project: the Mammalian Gene Collection (MGC).</title>
        <authorList>
            <consortium name="The MGC Project Team"/>
        </authorList>
    </citation>
    <scope>NUCLEOTIDE SEQUENCE [LARGE SCALE MRNA] (ISOFORMS 1 AND 2)</scope>
    <source>
        <tissue>Mammary gland</tissue>
    </source>
</reference>
<reference key="2">
    <citation type="journal article" date="2007" name="Nature">
        <title>Ambra1 regulates autophagy and development of the nervous system.</title>
        <authorList>
            <person name="Maria Fimia G."/>
            <person name="Stoykova A."/>
            <person name="Romagnoli A."/>
            <person name="Giunta L."/>
            <person name="Di Bartolomeo S."/>
            <person name="Nardacci R."/>
            <person name="Corazzari M."/>
            <person name="Fuoco C."/>
            <person name="Ucar A."/>
            <person name="Schwartz P."/>
            <person name="Gruss P."/>
            <person name="Piacentini M."/>
            <person name="Chowdhury K."/>
            <person name="Cecconi F."/>
        </authorList>
    </citation>
    <scope>INTERACTION WITH BECN1 AND AMBRA1</scope>
</reference>
<reference key="3">
    <citation type="journal article" date="2010" name="Cell">
        <title>A tissue-specific atlas of mouse protein phosphorylation and expression.</title>
        <authorList>
            <person name="Huttlin E.L."/>
            <person name="Jedrychowski M.P."/>
            <person name="Elias J.E."/>
            <person name="Goswami T."/>
            <person name="Rad R."/>
            <person name="Beausoleil S.A."/>
            <person name="Villen J."/>
            <person name="Haas W."/>
            <person name="Sowa M.E."/>
            <person name="Gygi S.P."/>
        </authorList>
    </citation>
    <scope>IDENTIFICATION BY MASS SPECTROMETRY [LARGE SCALE ANALYSIS]</scope>
    <source>
        <tissue>Brain</tissue>
        <tissue>Brown adipose tissue</tissue>
        <tissue>Lung</tissue>
        <tissue>Spleen</tissue>
        <tissue>Testis</tissue>
    </source>
</reference>
<reference key="4">
    <citation type="journal article" date="2010" name="J. Cell Biol.">
        <title>The class IA phosphatidylinositol 3-kinase p110-beta subunit is a positive regulator of autophagy.</title>
        <authorList>
            <person name="Dou Z."/>
            <person name="Chattopadhyay M."/>
            <person name="Pan J.-A."/>
            <person name="Guerriero J.L."/>
            <person name="Jiang Y.-P."/>
            <person name="Ballou L.M."/>
            <person name="Yue Z."/>
            <person name="Lin R.Z."/>
            <person name="Zong W.-X."/>
        </authorList>
    </citation>
    <scope>IDENTIFICATION IN A COMPLEX WITH PIK3R4 AND PIK3CB</scope>
</reference>
<reference key="5">
    <citation type="journal article" date="2012" name="J. Biol. Chem.">
        <title>Receptor signaling lymphocyte-activation molecule family 1 (Slamf1) regulates membrane fusion and NADPH oxidase 2 (NOX2) activity by recruiting a Beclin-1/Vps34/ultraviolet radiation resistance-associated gene (UVRAG) complex.</title>
        <authorList>
            <person name="Ma C."/>
            <person name="Wang N."/>
            <person name="Detre C."/>
            <person name="Wang G."/>
            <person name="O'Keeffe M."/>
            <person name="Terhorst C."/>
        </authorList>
    </citation>
    <scope>SUBCELLULAR LOCATION</scope>
    <scope>INTERACTION WITH SLAMF1</scope>
</reference>
<reference key="6">
    <citation type="journal article" date="2013" name="Cell">
        <title>Differential regulation of distinct Vps34 complexes by AMPK in nutrient stress and autophagy.</title>
        <authorList>
            <person name="Kim J."/>
            <person name="Kim Y.C."/>
            <person name="Fang C."/>
            <person name="Russell R.C."/>
            <person name="Kim J.H."/>
            <person name="Fan W."/>
            <person name="Liu R."/>
            <person name="Zhong Q."/>
            <person name="Guan K.L."/>
        </authorList>
    </citation>
    <scope>PHOSPHORYLATION AT THR-163 AND SER-165</scope>
    <scope>MUTAGENESIS OF THR-163 AND SER-165</scope>
    <scope>IDENTIFICATION IN A COMPLEX WITH PIK3R4; BECN1; UVRAG AND ATG14</scope>
</reference>
<reference key="7">
    <citation type="journal article" date="2013" name="Nature">
        <title>Functional interaction between autophagy and ciliogenesis.</title>
        <authorList>
            <person name="Pampliega O."/>
            <person name="Orhon I."/>
            <person name="Patel B."/>
            <person name="Sridhar S."/>
            <person name="Diaz-Carretero A."/>
            <person name="Beau I."/>
            <person name="Codogno P."/>
            <person name="Satir B.H."/>
            <person name="Satir P."/>
            <person name="Cuervo A.M."/>
        </authorList>
    </citation>
    <scope>SUBCELLULAR LOCATION</scope>
</reference>
<reference key="8">
    <citation type="journal article" date="2021" name="Dev. Cell">
        <title>Autophagic elimination of ribosomes during spermiogenesis provides energy for flagellar motility.</title>
        <authorList>
            <person name="Lei Y."/>
            <person name="Zhang X."/>
            <person name="Xu Q."/>
            <person name="Liu S."/>
            <person name="Li C."/>
            <person name="Jiang H."/>
            <person name="Lin H."/>
            <person name="Kong E."/>
            <person name="Liu J."/>
            <person name="Qi S."/>
            <person name="Li H."/>
            <person name="Xu W."/>
            <person name="Lu K."/>
        </authorList>
    </citation>
    <scope>INTERACTION WITH ARMC3</scope>
</reference>
<comment type="function">
    <text evidence="1 2">Catalytic subunit of the PI3K complex that mediates formation of phosphatidylinositol 3-phosphate; different complex forms are believed to play a role in multiple membrane trafficking pathways: PI3KC3-C1 is involved in initiation of autophagosomes and PI3KC3-C2 in maturation of autophagosomes and endocytosis. As part of PI3KC3-C1, promotes endoplasmic reticulum membrane curvature formation prior to vesicle budding. Involved in regulation of degradative endocytic trafficking and required for the abscission step in cytokinesis, probably in the context of PI3KC3-C2. Involved in the transport of lysosomal enzyme precursors to lysosomes. Required for transport from early to late endosomes (By similarity).</text>
</comment>
<comment type="catalytic activity">
    <reaction evidence="2">
        <text>a 1,2-diacyl-sn-glycero-3-phospho-(1D-myo-inositol) + ATP = a 1,2-diacyl-sn-glycero-3-phospho-(1D-myo-inositol-3-phosphate) + ADP + H(+)</text>
        <dbReference type="Rhea" id="RHEA:12709"/>
        <dbReference type="ChEBI" id="CHEBI:15378"/>
        <dbReference type="ChEBI" id="CHEBI:30616"/>
        <dbReference type="ChEBI" id="CHEBI:57880"/>
        <dbReference type="ChEBI" id="CHEBI:58088"/>
        <dbReference type="ChEBI" id="CHEBI:456216"/>
        <dbReference type="EC" id="2.7.1.137"/>
    </reaction>
    <physiologicalReaction direction="left-to-right" evidence="2">
        <dbReference type="Rhea" id="RHEA:12710"/>
    </physiologicalReaction>
</comment>
<comment type="cofactor">
    <cofactor evidence="2">
        <name>Mn(2+)</name>
        <dbReference type="ChEBI" id="CHEBI:29035"/>
    </cofactor>
</comment>
<comment type="subunit">
    <text evidence="2 3 8 9 11 13">Component of the PI3K (PI3KC3/PI3K-III/class III phosphatidylinositol 3-kinase) complex the core of which is composed of the catalytic subunit PIK3C3, the regulatory subunit PIK3R4 and BECN1 associating with additional regulatory/auxiliary subunits to form alternative complex forms. Alternative complex forms containing a fourth regulatory subunit in a mutually exclusive manner are: the PI3K complex I (PI3KC3-C1) containing ATG14, and the PI3K complex II (PI3KC3-C2) containing UVRAG. PI3KC3-C1 displays a V-shaped architecture with PIK3R4 serving as a bridge between PIK3C3 and the ATG14:BECN1 subcomplex (By similarity). Both, PI3KC3-C1 and PI3KC3-C2, can associate with further regulatory subunits such as RUBCN, SH3GLB1/Bif-1 and AMBRA1 (PubMed:17589504). PI3KC3-C1 probably associates with PIK3CB (PubMed:21059846). Interacts with RAB7A in the presence of PIK3R4 (By similarity). Interacts with AMBRA1 (PubMed:17589504). Interacts with BECN1P1/BECN2 (By similarity). Interacts with SLAMF1 (PubMed:22493499). May be a component of a complex composed of RAB5A (in GDP-bound form), DYN2 and PIK3C3 (By similarity). Interacts with NCKAP1L (By similarity). Interacts with ATG14; this interaction is increased in the absence of TMEM39A (By similarity). Interacts with STEEP1; the interaction is STING1-dependent and required for trafficking of STING1 from the endoplasmic reticulum (By similarity). Interacts with YWHAG (By similarity). Interacts with ARMC3 (PubMed:34428398).</text>
</comment>
<comment type="interaction">
    <interactant intactId="EBI-6678149">
        <id>Q6PF93</id>
    </interactant>
    <interactant intactId="EBI-643716">
        <id>O88597</id>
        <label>Becn1</label>
    </interactant>
    <organismsDiffer>false</organismsDiffer>
    <experiments>6</experiments>
</comment>
<comment type="interaction">
    <interactant intactId="EBI-6678149">
        <id>Q6PF93</id>
    </interactant>
    <interactant intactId="EBI-298630">
        <id>P23242</id>
        <label>Gja1</label>
    </interactant>
    <organismsDiffer>false</organismsDiffer>
    <experiments>4</experiments>
</comment>
<comment type="subcellular location">
    <subcellularLocation>
        <location evidence="2">Midbody</location>
    </subcellularLocation>
    <subcellularLocation>
        <location evidence="2">Late endosome</location>
    </subcellularLocation>
    <subcellularLocation>
        <location evidence="10">Cytoplasmic vesicle</location>
        <location evidence="10">Autophagosome</location>
    </subcellularLocation>
    <text evidence="2 12">As component of the PI3K complex I localized to pre-autophagosome structures. As component of the PI3K complex II localized predominantly to endosomes (By similarity). Also localizes to discrete punctae along the ciliary axoneme and to the base of the ciliary axoneme (PubMed:24089209).</text>
</comment>
<comment type="alternative products">
    <event type="alternative splicing"/>
    <isoform>
        <id>Q6PF93-1</id>
        <name>1</name>
        <sequence type="displayed"/>
    </isoform>
    <isoform>
        <id>Q6PF93-2</id>
        <name>2</name>
        <sequence type="described" ref="VSP_016459 VSP_016460"/>
    </isoform>
</comment>
<comment type="PTM">
    <text evidence="2">Ubiquitinated via 'Lys-29'- and 'Lys-48'-linked ubiquitination by UBE3C, promoting its degradation. Deubiquitination by ZRANB1/TRABID promotes its stabilization, leading to autophagosome maturation.</text>
</comment>
<comment type="similarity">
    <text evidence="6">Belongs to the PI3/PI4-kinase family.</text>
</comment>
<keyword id="KW-0025">Alternative splicing</keyword>
<keyword id="KW-0067">ATP-binding</keyword>
<keyword id="KW-0072">Autophagy</keyword>
<keyword id="KW-0131">Cell cycle</keyword>
<keyword id="KW-0132">Cell division</keyword>
<keyword id="KW-0968">Cytoplasmic vesicle</keyword>
<keyword id="KW-0967">Endosome</keyword>
<keyword id="KW-0418">Kinase</keyword>
<keyword id="KW-0443">Lipid metabolism</keyword>
<keyword id="KW-0464">Manganese</keyword>
<keyword id="KW-0547">Nucleotide-binding</keyword>
<keyword id="KW-0597">Phosphoprotein</keyword>
<keyword id="KW-1185">Reference proteome</keyword>
<keyword id="KW-0808">Transferase</keyword>
<keyword id="KW-0832">Ubl conjugation</keyword>
<gene>
    <name evidence="17" type="primary">Pik3c3</name>
    <name evidence="15" type="synonym">Vps34</name>
</gene>
<sequence>MGEAEKFHYIYSCDLDINVQLKIGSLEGKREQKSYKAVLEDPMLKFSGLYQETCSDLYVTCQVFAEGKPLALPVRTSYKAFSTRWNWNEWLKLPVKYPDLPRNAQVALTIWDVYGPGSAVPVGGTTVSLFGKYGMFRQGMHDLKVWPNVEADGSEPTRTPGRTSSTLSEDQMSRLAKLTKAHRQGHMVKVDWLDRLTFREIEMINESEKRSSNFMYLMVEFRCVKCDDKEYGIVYYEKDGDESSPILTSFELVKVPDPQMSMENLVESKHHKLARSLRSGPSDHDLKPNATTRDQLNIIVSYPPTKQLTYEEQDLVWKFRYYLTNQEKALTKFLKCVNWDLPQEAKQALELLGKWKPMDVEDSLELLSSHYTNPTVRRYAVARLRQADDEDLLMYLLQLVQALKYENFDDIKNGLEPTKKDSQTSASESLSNSGVSSGDIDSSQIITNPLPPVASPPPASKAKEVSDGENLEQDLCTFLISRACKNSTLANYLYWYVIVECEDQDTQQRDPKTHEMYLNVMRRFSQALLKGDKSVRVMRSLLAAQQTFVDRLVHLMKAVQRESGNRKKKNERLQALLGDNEKMNLSDVELIPLPLEPQVKIRGIIPETATLFKSALMPAQLFFKTEDGGKYPVIFKHGDDLRQDQLILQIISLMDKLLRKENLDLKLTPYKVLATSTKHGFMQFIQSVPVAEVLDTEGSIQNFFRKYAPSETGPYGISAEVMDTYVKSCAGYCVITYILGVGDRHLDNLLLTKTGKLFHIDFGYILGRDPKPLPPPMKLNKEMVEGMGGTQSEQYQEFRKQCYTAFLHLRRYSNLILNLFSLMVDANIPDIALEPDKTVKKVQDKFRLDLSDEEAVHYMQSLIDESVHALFAAVVEQIHKFAQYWRK</sequence>
<name>PK3C3_MOUSE</name>
<evidence type="ECO:0000250" key="1">
    <source>
        <dbReference type="UniProtKB" id="O88763"/>
    </source>
</evidence>
<evidence type="ECO:0000250" key="2">
    <source>
        <dbReference type="UniProtKB" id="Q8NEB9"/>
    </source>
</evidence>
<evidence type="ECO:0000250" key="3">
    <source>
        <dbReference type="UniProtKB" id="Q9TXI7"/>
    </source>
</evidence>
<evidence type="ECO:0000255" key="4">
    <source>
        <dbReference type="PROSITE-ProRule" id="PRU00269"/>
    </source>
</evidence>
<evidence type="ECO:0000255" key="5">
    <source>
        <dbReference type="PROSITE-ProRule" id="PRU00878"/>
    </source>
</evidence>
<evidence type="ECO:0000255" key="6">
    <source>
        <dbReference type="PROSITE-ProRule" id="PRU00880"/>
    </source>
</evidence>
<evidence type="ECO:0000256" key="7">
    <source>
        <dbReference type="SAM" id="MobiDB-lite"/>
    </source>
</evidence>
<evidence type="ECO:0000269" key="8">
    <source>
    </source>
</evidence>
<evidence type="ECO:0000269" key="9">
    <source>
    </source>
</evidence>
<evidence type="ECO:0000269" key="10">
    <source>
    </source>
</evidence>
<evidence type="ECO:0000269" key="11">
    <source>
    </source>
</evidence>
<evidence type="ECO:0000269" key="12">
    <source>
    </source>
</evidence>
<evidence type="ECO:0000269" key="13">
    <source>
    </source>
</evidence>
<evidence type="ECO:0000303" key="14">
    <source>
    </source>
</evidence>
<evidence type="ECO:0000303" key="15">
    <source>
    </source>
</evidence>
<evidence type="ECO:0000305" key="16"/>
<evidence type="ECO:0000312" key="17">
    <source>
        <dbReference type="MGI" id="MGI:2445019"/>
    </source>
</evidence>
<protein>
    <recommendedName>
        <fullName>Phosphatidylinositol 3-kinase catalytic subunit type 3</fullName>
        <shortName>PI3-kinase type 3</shortName>
        <shortName>PI3K type 3</shortName>
        <shortName>PtdIns-3-kinase type 3</shortName>
        <ecNumber evidence="2">2.7.1.137</ecNumber>
    </recommendedName>
    <alternativeName>
        <fullName>Phosphoinositide-3-kinase class 3</fullName>
    </alternativeName>
</protein>
<accession>Q6PF93</accession>
<accession>Q8R3S8</accession>
<proteinExistence type="evidence at protein level"/>
<dbReference type="EC" id="2.7.1.137" evidence="2"/>
<dbReference type="EMBL" id="BC024675">
    <property type="protein sequence ID" value="AAH24675.1"/>
    <property type="molecule type" value="mRNA"/>
</dbReference>
<dbReference type="EMBL" id="BC057678">
    <property type="protein sequence ID" value="AAH57678.1"/>
    <property type="molecule type" value="mRNA"/>
</dbReference>
<dbReference type="CCDS" id="CCDS37752.1">
    <molecule id="Q6PF93-1"/>
</dbReference>
<dbReference type="RefSeq" id="NP_852079.2">
    <molecule id="Q6PF93-1"/>
    <property type="nucleotide sequence ID" value="NM_181414.5"/>
</dbReference>
<dbReference type="RefSeq" id="XP_030106284.1">
    <molecule id="Q6PF93-1"/>
    <property type="nucleotide sequence ID" value="XM_030250424.1"/>
</dbReference>
<dbReference type="RefSeq" id="XP_030106285.1">
    <molecule id="Q6PF93-1"/>
    <property type="nucleotide sequence ID" value="XM_030250425.2"/>
</dbReference>
<dbReference type="SMR" id="Q6PF93"/>
<dbReference type="BioGRID" id="230382">
    <property type="interactions" value="21"/>
</dbReference>
<dbReference type="ComplexPortal" id="CPX-75">
    <property type="entry name" value="Phosphatidylinositol 3-kinase complex, class III, ATG14 variant"/>
</dbReference>
<dbReference type="ComplexPortal" id="CPX-76">
    <property type="entry name" value="Phosphatidylinositol 3-kinase complex, class III, UVRAG variant"/>
</dbReference>
<dbReference type="CORUM" id="Q6PF93"/>
<dbReference type="DIP" id="DIP-57222N"/>
<dbReference type="FunCoup" id="Q6PF93">
    <property type="interactions" value="3234"/>
</dbReference>
<dbReference type="IntAct" id="Q6PF93">
    <property type="interactions" value="9"/>
</dbReference>
<dbReference type="MINT" id="Q6PF93"/>
<dbReference type="STRING" id="10090.ENSMUSP00000111479"/>
<dbReference type="GlyGen" id="Q6PF93">
    <property type="glycosylation" value="2 sites, 2 N-linked glycans (2 sites)"/>
</dbReference>
<dbReference type="iPTMnet" id="Q6PF93"/>
<dbReference type="PhosphoSitePlus" id="Q6PF93"/>
<dbReference type="SwissPalm" id="Q6PF93"/>
<dbReference type="jPOST" id="Q6PF93"/>
<dbReference type="PaxDb" id="10090-ENSMUSP00000111479"/>
<dbReference type="ProteomicsDB" id="289434">
    <molecule id="Q6PF93-1"/>
</dbReference>
<dbReference type="ProteomicsDB" id="289435">
    <molecule id="Q6PF93-2"/>
</dbReference>
<dbReference type="Pumba" id="Q6PF93"/>
<dbReference type="Antibodypedia" id="22392">
    <property type="antibodies" value="900 antibodies from 39 providers"/>
</dbReference>
<dbReference type="DNASU" id="225326"/>
<dbReference type="Ensembl" id="ENSMUST00000115812.10">
    <molecule id="Q6PF93-1"/>
    <property type="protein sequence ID" value="ENSMUSP00000111479.4"/>
    <property type="gene ID" value="ENSMUSG00000033628.16"/>
</dbReference>
<dbReference type="GeneID" id="225326"/>
<dbReference type="KEGG" id="mmu:225326"/>
<dbReference type="UCSC" id="uc008ehw.1">
    <molecule id="Q6PF93-1"/>
    <property type="organism name" value="mouse"/>
</dbReference>
<dbReference type="AGR" id="MGI:2445019"/>
<dbReference type="CTD" id="5289"/>
<dbReference type="MGI" id="MGI:2445019">
    <property type="gene designation" value="Pik3c3"/>
</dbReference>
<dbReference type="VEuPathDB" id="HostDB:ENSMUSG00000033628"/>
<dbReference type="eggNOG" id="KOG0906">
    <property type="taxonomic scope" value="Eukaryota"/>
</dbReference>
<dbReference type="GeneTree" id="ENSGT00940000156943"/>
<dbReference type="HOGENOM" id="CLU_004869_0_0_1"/>
<dbReference type="InParanoid" id="Q6PF93"/>
<dbReference type="OMA" id="LHKFAQY"/>
<dbReference type="OrthoDB" id="67688at2759"/>
<dbReference type="PhylomeDB" id="Q6PF93"/>
<dbReference type="TreeFam" id="TF102032"/>
<dbReference type="BRENDA" id="2.7.1.137">
    <property type="organism ID" value="3474"/>
</dbReference>
<dbReference type="Reactome" id="R-MMU-109704">
    <property type="pathway name" value="PI3K Cascade"/>
</dbReference>
<dbReference type="Reactome" id="R-MMU-1632852">
    <property type="pathway name" value="Macroautophagy"/>
</dbReference>
<dbReference type="Reactome" id="R-MMU-1660514">
    <property type="pathway name" value="Synthesis of PIPs at the Golgi membrane"/>
</dbReference>
<dbReference type="Reactome" id="R-MMU-1660516">
    <property type="pathway name" value="Synthesis of PIPs at the early endosome membrane"/>
</dbReference>
<dbReference type="Reactome" id="R-MMU-1660517">
    <property type="pathway name" value="Synthesis of PIPs at the late endosome membrane"/>
</dbReference>
<dbReference type="Reactome" id="R-MMU-168138">
    <property type="pathway name" value="Toll Like Receptor 9 (TLR9) Cascade"/>
</dbReference>
<dbReference type="Reactome" id="R-MMU-5668599">
    <property type="pathway name" value="RHO GTPases Activate NADPH Oxidases"/>
</dbReference>
<dbReference type="BioGRID-ORCS" id="225326">
    <property type="hits" value="33 hits in 80 CRISPR screens"/>
</dbReference>
<dbReference type="ChiTaRS" id="Pik3c3">
    <property type="organism name" value="mouse"/>
</dbReference>
<dbReference type="PRO" id="PR:Q6PF93"/>
<dbReference type="Proteomes" id="UP000000589">
    <property type="component" value="Chromosome 18"/>
</dbReference>
<dbReference type="RNAct" id="Q6PF93">
    <property type="molecule type" value="protein"/>
</dbReference>
<dbReference type="Bgee" id="ENSMUSG00000033628">
    <property type="expression patterns" value="Expressed in orbitosphenoid and 288 other cell types or tissues"/>
</dbReference>
<dbReference type="ExpressionAtlas" id="Q6PF93">
    <property type="expression patterns" value="baseline and differential"/>
</dbReference>
<dbReference type="GO" id="GO:0044754">
    <property type="term" value="C:autolysosome"/>
    <property type="evidence" value="ECO:0000266"/>
    <property type="project" value="MGI"/>
</dbReference>
<dbReference type="GO" id="GO:0005776">
    <property type="term" value="C:autophagosome"/>
    <property type="evidence" value="ECO:0007669"/>
    <property type="project" value="UniProtKB-SubCell"/>
</dbReference>
<dbReference type="GO" id="GO:0098982">
    <property type="term" value="C:GABA-ergic synapse"/>
    <property type="evidence" value="ECO:0000314"/>
    <property type="project" value="SynGO"/>
</dbReference>
<dbReference type="GO" id="GO:0098978">
    <property type="term" value="C:glutamatergic synapse"/>
    <property type="evidence" value="ECO:0000314"/>
    <property type="project" value="SynGO"/>
</dbReference>
<dbReference type="GO" id="GO:0005770">
    <property type="term" value="C:late endosome"/>
    <property type="evidence" value="ECO:0000250"/>
    <property type="project" value="UniProtKB"/>
</dbReference>
<dbReference type="GO" id="GO:0030496">
    <property type="term" value="C:midbody"/>
    <property type="evidence" value="ECO:0000250"/>
    <property type="project" value="UniProtKB"/>
</dbReference>
<dbReference type="GO" id="GO:0045335">
    <property type="term" value="C:phagocytic vesicle"/>
    <property type="evidence" value="ECO:0000314"/>
    <property type="project" value="MGI"/>
</dbReference>
<dbReference type="GO" id="GO:0035032">
    <property type="term" value="C:phosphatidylinositol 3-kinase complex, class III"/>
    <property type="evidence" value="ECO:0000314"/>
    <property type="project" value="UniProtKB"/>
</dbReference>
<dbReference type="GO" id="GO:0098794">
    <property type="term" value="C:postsynapse"/>
    <property type="evidence" value="ECO:0000314"/>
    <property type="project" value="SynGO"/>
</dbReference>
<dbReference type="GO" id="GO:0098845">
    <property type="term" value="C:postsynaptic endosome"/>
    <property type="evidence" value="ECO:0000314"/>
    <property type="project" value="SynGO"/>
</dbReference>
<dbReference type="GO" id="GO:0098830">
    <property type="term" value="C:presynaptic endosome"/>
    <property type="evidence" value="ECO:0000314"/>
    <property type="project" value="SynGO"/>
</dbReference>
<dbReference type="GO" id="GO:0016303">
    <property type="term" value="F:1-phosphatidylinositol-3-kinase activity"/>
    <property type="evidence" value="ECO:0000250"/>
    <property type="project" value="UniProtKB"/>
</dbReference>
<dbReference type="GO" id="GO:0005524">
    <property type="term" value="F:ATP binding"/>
    <property type="evidence" value="ECO:0007669"/>
    <property type="project" value="UniProtKB-KW"/>
</dbReference>
<dbReference type="GO" id="GO:0004672">
    <property type="term" value="F:protein kinase activity"/>
    <property type="evidence" value="ECO:0000315"/>
    <property type="project" value="MGI"/>
</dbReference>
<dbReference type="GO" id="GO:0000045">
    <property type="term" value="P:autophagosome assembly"/>
    <property type="evidence" value="ECO:0000315"/>
    <property type="project" value="MGI"/>
</dbReference>
<dbReference type="GO" id="GO:0097352">
    <property type="term" value="P:autophagosome maturation"/>
    <property type="evidence" value="ECO:0000266"/>
    <property type="project" value="ComplexPortal"/>
</dbReference>
<dbReference type="GO" id="GO:0006914">
    <property type="term" value="P:autophagy"/>
    <property type="evidence" value="ECO:0000266"/>
    <property type="project" value="MGI"/>
</dbReference>
<dbReference type="GO" id="GO:0051301">
    <property type="term" value="P:cell division"/>
    <property type="evidence" value="ECO:0007669"/>
    <property type="project" value="UniProtKB-KW"/>
</dbReference>
<dbReference type="GO" id="GO:0042149">
    <property type="term" value="P:cellular response to glucose starvation"/>
    <property type="evidence" value="ECO:0000314"/>
    <property type="project" value="UniProtKB"/>
</dbReference>
<dbReference type="GO" id="GO:0009267">
    <property type="term" value="P:cellular response to starvation"/>
    <property type="evidence" value="ECO:0000315"/>
    <property type="project" value="MGI"/>
</dbReference>
<dbReference type="GO" id="GO:0045022">
    <property type="term" value="P:early endosome to late endosome transport"/>
    <property type="evidence" value="ECO:0000250"/>
    <property type="project" value="UniProtKB"/>
</dbReference>
<dbReference type="GO" id="GO:0007032">
    <property type="term" value="P:endosome organization"/>
    <property type="evidence" value="ECO:0007669"/>
    <property type="project" value="Ensembl"/>
</dbReference>
<dbReference type="GO" id="GO:0016236">
    <property type="term" value="P:macroautophagy"/>
    <property type="evidence" value="ECO:0000315"/>
    <property type="project" value="UniProtKB"/>
</dbReference>
<dbReference type="GO" id="GO:0043491">
    <property type="term" value="P:phosphatidylinositol 3-kinase/protein kinase B signal transduction"/>
    <property type="evidence" value="ECO:0007669"/>
    <property type="project" value="Ensembl"/>
</dbReference>
<dbReference type="GO" id="GO:0036092">
    <property type="term" value="P:phosphatidylinositol-3-phosphate biosynthetic process"/>
    <property type="evidence" value="ECO:0000315"/>
    <property type="project" value="MGI"/>
</dbReference>
<dbReference type="GO" id="GO:0044829">
    <property type="term" value="P:positive regulation by host of viral genome replication"/>
    <property type="evidence" value="ECO:0007669"/>
    <property type="project" value="Ensembl"/>
</dbReference>
<dbReference type="GO" id="GO:0034497">
    <property type="term" value="P:protein localization to phagophore assembly site"/>
    <property type="evidence" value="ECO:0000315"/>
    <property type="project" value="MGI"/>
</dbReference>
<dbReference type="GO" id="GO:0016485">
    <property type="term" value="P:protein processing"/>
    <property type="evidence" value="ECO:0007669"/>
    <property type="project" value="Ensembl"/>
</dbReference>
<dbReference type="GO" id="GO:0006622">
    <property type="term" value="P:protein targeting to lysosome"/>
    <property type="evidence" value="ECO:0000303"/>
    <property type="project" value="ComplexPortal"/>
</dbReference>
<dbReference type="GO" id="GO:0010506">
    <property type="term" value="P:regulation of autophagy"/>
    <property type="evidence" value="ECO:0000266"/>
    <property type="project" value="ComplexPortal"/>
</dbReference>
<dbReference type="GO" id="GO:0032465">
    <property type="term" value="P:regulation of cytokinesis"/>
    <property type="evidence" value="ECO:0000250"/>
    <property type="project" value="UniProtKB"/>
</dbReference>
<dbReference type="GO" id="GO:0016241">
    <property type="term" value="P:regulation of macroautophagy"/>
    <property type="evidence" value="ECO:0000266"/>
    <property type="project" value="ComplexPortal"/>
</dbReference>
<dbReference type="GO" id="GO:0043201">
    <property type="term" value="P:response to L-leucine"/>
    <property type="evidence" value="ECO:0007669"/>
    <property type="project" value="Ensembl"/>
</dbReference>
<dbReference type="GO" id="GO:0048488">
    <property type="term" value="P:synaptic vesicle endocytosis"/>
    <property type="evidence" value="ECO:0000314"/>
    <property type="project" value="SynGO"/>
</dbReference>
<dbReference type="CDD" id="cd08397">
    <property type="entry name" value="C2_PI3K_class_III"/>
    <property type="match status" value="1"/>
</dbReference>
<dbReference type="CDD" id="cd00870">
    <property type="entry name" value="PI3Ka_III"/>
    <property type="match status" value="1"/>
</dbReference>
<dbReference type="CDD" id="cd00896">
    <property type="entry name" value="PI3Kc_III"/>
    <property type="match status" value="1"/>
</dbReference>
<dbReference type="FunFam" id="1.10.1070.11:FF:000002">
    <property type="entry name" value="Phosphatidylinositol 3-kinase catalytic subunit type 3"/>
    <property type="match status" value="1"/>
</dbReference>
<dbReference type="FunFam" id="1.25.40.70:FF:000003">
    <property type="entry name" value="Phosphatidylinositol 3-kinase catalytic subunit type 3"/>
    <property type="match status" value="1"/>
</dbReference>
<dbReference type="FunFam" id="2.60.40.150:FF:000043">
    <property type="entry name" value="Phosphatidylinositol 3-kinase catalytic subunit type 3"/>
    <property type="match status" value="1"/>
</dbReference>
<dbReference type="FunFam" id="3.30.1010.10:FF:000002">
    <property type="entry name" value="Phosphatidylinositol 3-kinase catalytic subunit type 3"/>
    <property type="match status" value="1"/>
</dbReference>
<dbReference type="Gene3D" id="2.60.40.150">
    <property type="entry name" value="C2 domain"/>
    <property type="match status" value="1"/>
</dbReference>
<dbReference type="Gene3D" id="1.10.1070.11">
    <property type="entry name" value="Phosphatidylinositol 3-/4-kinase, catalytic domain"/>
    <property type="match status" value="1"/>
</dbReference>
<dbReference type="Gene3D" id="3.30.1010.10">
    <property type="entry name" value="Phosphatidylinositol 3-kinase Catalytic Subunit, Chain A, domain 4"/>
    <property type="match status" value="1"/>
</dbReference>
<dbReference type="Gene3D" id="1.25.40.70">
    <property type="entry name" value="Phosphatidylinositol 3-kinase, accessory domain (PIK)"/>
    <property type="match status" value="1"/>
</dbReference>
<dbReference type="InterPro" id="IPR016024">
    <property type="entry name" value="ARM-type_fold"/>
</dbReference>
<dbReference type="InterPro" id="IPR035892">
    <property type="entry name" value="C2_domain_sf"/>
</dbReference>
<dbReference type="InterPro" id="IPR011009">
    <property type="entry name" value="Kinase-like_dom_sf"/>
</dbReference>
<dbReference type="InterPro" id="IPR000403">
    <property type="entry name" value="PI3/4_kinase_cat_dom"/>
</dbReference>
<dbReference type="InterPro" id="IPR036940">
    <property type="entry name" value="PI3/4_kinase_cat_sf"/>
</dbReference>
<dbReference type="InterPro" id="IPR018936">
    <property type="entry name" value="PI3/4_kinase_CS"/>
</dbReference>
<dbReference type="InterPro" id="IPR002420">
    <property type="entry name" value="PI3K-type_C2_dom"/>
</dbReference>
<dbReference type="InterPro" id="IPR001263">
    <property type="entry name" value="PI3K_accessory_dom"/>
</dbReference>
<dbReference type="InterPro" id="IPR042236">
    <property type="entry name" value="PI3K_accessory_sf"/>
</dbReference>
<dbReference type="InterPro" id="IPR008290">
    <property type="entry name" value="PI3K_Vps34"/>
</dbReference>
<dbReference type="InterPro" id="IPR015433">
    <property type="entry name" value="PI_Kinase"/>
</dbReference>
<dbReference type="PANTHER" id="PTHR10048:SF7">
    <property type="entry name" value="PHOSPHATIDYLINOSITOL 3-KINASE CATALYTIC SUBUNIT TYPE 3"/>
    <property type="match status" value="1"/>
</dbReference>
<dbReference type="PANTHER" id="PTHR10048">
    <property type="entry name" value="PHOSPHATIDYLINOSITOL KINASE"/>
    <property type="match status" value="1"/>
</dbReference>
<dbReference type="Pfam" id="PF00454">
    <property type="entry name" value="PI3_PI4_kinase"/>
    <property type="match status" value="1"/>
</dbReference>
<dbReference type="Pfam" id="PF00792">
    <property type="entry name" value="PI3K_C2"/>
    <property type="match status" value="1"/>
</dbReference>
<dbReference type="Pfam" id="PF00613">
    <property type="entry name" value="PI3Ka"/>
    <property type="match status" value="1"/>
</dbReference>
<dbReference type="PIRSF" id="PIRSF000587">
    <property type="entry name" value="PI3K_Vps34"/>
    <property type="match status" value="1"/>
</dbReference>
<dbReference type="SMART" id="SM00142">
    <property type="entry name" value="PI3K_C2"/>
    <property type="match status" value="1"/>
</dbReference>
<dbReference type="SMART" id="SM00145">
    <property type="entry name" value="PI3Ka"/>
    <property type="match status" value="1"/>
</dbReference>
<dbReference type="SMART" id="SM00146">
    <property type="entry name" value="PI3Kc"/>
    <property type="match status" value="1"/>
</dbReference>
<dbReference type="SUPFAM" id="SSF48371">
    <property type="entry name" value="ARM repeat"/>
    <property type="match status" value="1"/>
</dbReference>
<dbReference type="SUPFAM" id="SSF49562">
    <property type="entry name" value="C2 domain (Calcium/lipid-binding domain, CaLB)"/>
    <property type="match status" value="1"/>
</dbReference>
<dbReference type="SUPFAM" id="SSF56112">
    <property type="entry name" value="Protein kinase-like (PK-like)"/>
    <property type="match status" value="1"/>
</dbReference>
<dbReference type="PROSITE" id="PS51547">
    <property type="entry name" value="C2_PI3K"/>
    <property type="match status" value="1"/>
</dbReference>
<dbReference type="PROSITE" id="PS00915">
    <property type="entry name" value="PI3_4_KINASE_1"/>
    <property type="match status" value="1"/>
</dbReference>
<dbReference type="PROSITE" id="PS00916">
    <property type="entry name" value="PI3_4_KINASE_2"/>
    <property type="match status" value="1"/>
</dbReference>
<dbReference type="PROSITE" id="PS50290">
    <property type="entry name" value="PI3_4_KINASE_3"/>
    <property type="match status" value="1"/>
</dbReference>
<dbReference type="PROSITE" id="PS51545">
    <property type="entry name" value="PIK_HELICAL"/>
    <property type="match status" value="1"/>
</dbReference>
<organism>
    <name type="scientific">Mus musculus</name>
    <name type="common">Mouse</name>
    <dbReference type="NCBI Taxonomy" id="10090"/>
    <lineage>
        <taxon>Eukaryota</taxon>
        <taxon>Metazoa</taxon>
        <taxon>Chordata</taxon>
        <taxon>Craniata</taxon>
        <taxon>Vertebrata</taxon>
        <taxon>Euteleostomi</taxon>
        <taxon>Mammalia</taxon>
        <taxon>Eutheria</taxon>
        <taxon>Euarchontoglires</taxon>
        <taxon>Glires</taxon>
        <taxon>Rodentia</taxon>
        <taxon>Myomorpha</taxon>
        <taxon>Muroidea</taxon>
        <taxon>Muridae</taxon>
        <taxon>Murinae</taxon>
        <taxon>Mus</taxon>
        <taxon>Mus</taxon>
    </lineage>
</organism>